<comment type="function">
    <text evidence="1">Catalyzes the stereoinversion of LL-2,6-diaminopimelate (L,L-DAP) to meso-diaminopimelate (meso-DAP), a precursor of L-lysine and an essential component of the bacterial peptidoglycan.</text>
</comment>
<comment type="catalytic activity">
    <reaction evidence="1">
        <text>(2S,6S)-2,6-diaminopimelate = meso-2,6-diaminopimelate</text>
        <dbReference type="Rhea" id="RHEA:15393"/>
        <dbReference type="ChEBI" id="CHEBI:57609"/>
        <dbReference type="ChEBI" id="CHEBI:57791"/>
        <dbReference type="EC" id="5.1.1.7"/>
    </reaction>
</comment>
<comment type="pathway">
    <text evidence="1">Amino-acid biosynthesis; L-lysine biosynthesis via DAP pathway; DL-2,6-diaminopimelate from LL-2,6-diaminopimelate: step 1/1.</text>
</comment>
<comment type="subunit">
    <text evidence="1">Homodimer.</text>
</comment>
<comment type="subcellular location">
    <subcellularLocation>
        <location evidence="1">Cytoplasm</location>
    </subcellularLocation>
</comment>
<comment type="similarity">
    <text evidence="1">Belongs to the diaminopimelate epimerase family.</text>
</comment>
<keyword id="KW-0028">Amino-acid biosynthesis</keyword>
<keyword id="KW-0963">Cytoplasm</keyword>
<keyword id="KW-0413">Isomerase</keyword>
<keyword id="KW-0457">Lysine biosynthesis</keyword>
<protein>
    <recommendedName>
        <fullName evidence="1">Diaminopimelate epimerase</fullName>
        <shortName evidence="1">DAP epimerase</shortName>
        <ecNumber evidence="1">5.1.1.7</ecNumber>
    </recommendedName>
    <alternativeName>
        <fullName evidence="1">PLP-independent amino acid racemase</fullName>
    </alternativeName>
</protein>
<proteinExistence type="inferred from homology"/>
<organism>
    <name type="scientific">Listeria monocytogenes serotype 4b (strain CLIP80459)</name>
    <dbReference type="NCBI Taxonomy" id="568819"/>
    <lineage>
        <taxon>Bacteria</taxon>
        <taxon>Bacillati</taxon>
        <taxon>Bacillota</taxon>
        <taxon>Bacilli</taxon>
        <taxon>Bacillales</taxon>
        <taxon>Listeriaceae</taxon>
        <taxon>Listeria</taxon>
    </lineage>
</organism>
<evidence type="ECO:0000255" key="1">
    <source>
        <dbReference type="HAMAP-Rule" id="MF_00197"/>
    </source>
</evidence>
<accession>C1KWW2</accession>
<reference key="1">
    <citation type="journal article" date="2012" name="BMC Genomics">
        <title>Comparative genomics and transcriptomics of lineages I, II, and III strains of Listeria monocytogenes.</title>
        <authorList>
            <person name="Hain T."/>
            <person name="Ghai R."/>
            <person name="Billion A."/>
            <person name="Kuenne C.T."/>
            <person name="Steinweg C."/>
            <person name="Izar B."/>
            <person name="Mohamed W."/>
            <person name="Mraheil M."/>
            <person name="Domann E."/>
            <person name="Schaffrath S."/>
            <person name="Karst U."/>
            <person name="Goesmann A."/>
            <person name="Oehm S."/>
            <person name="Puhler A."/>
            <person name="Merkl R."/>
            <person name="Vorwerk S."/>
            <person name="Glaser P."/>
            <person name="Garrido P."/>
            <person name="Rusniok C."/>
            <person name="Buchrieser C."/>
            <person name="Goebel W."/>
            <person name="Chakraborty T."/>
        </authorList>
    </citation>
    <scope>NUCLEOTIDE SEQUENCE [LARGE SCALE GENOMIC DNA]</scope>
    <source>
        <strain>CLIP80459</strain>
    </source>
</reference>
<gene>
    <name evidence="1" type="primary">dapF</name>
    <name type="ordered locus">Lm4b_02030</name>
</gene>
<sequence length="329" mass="36227">METIHFTKVHGSQNDFFLVDEEENHITEWSDEKRANFAIKLCDRKHSLGGADGILYVTKSSEVGPIGQMRVVNSDGSIASMCGNGLRTVARYLLEKHALTDAKVETMKAILDVKKATSLGFDIPTYQVEISPVKFAAETLPMHVGVEKLFNQVIPELDAELAFSAVSVPNPHLITFVDQAVLDSNKQEKLASYLNSENPYFPDGVNVSFVKRLSDDAIYVRTFERGVGFTNACGTAMSACSLIKKMLDNDILETPLNVYNDGGRVQVTAKKDAAGEISLQLIGNATFVSKGSVRYENDVVTELTNEATDEQGQYQALVKEVKEFLKTTE</sequence>
<name>DAPF_LISMC</name>
<dbReference type="EC" id="5.1.1.7" evidence="1"/>
<dbReference type="EMBL" id="FM242711">
    <property type="protein sequence ID" value="CAS05788.1"/>
    <property type="molecule type" value="Genomic_DNA"/>
</dbReference>
<dbReference type="RefSeq" id="WP_012681377.1">
    <property type="nucleotide sequence ID" value="NC_012488.1"/>
</dbReference>
<dbReference type="SMR" id="C1KWW2"/>
<dbReference type="KEGG" id="lmc:Lm4b_02030"/>
<dbReference type="HOGENOM" id="CLU_053306_3_1_9"/>
<dbReference type="UniPathway" id="UPA00034">
    <property type="reaction ID" value="UER00025"/>
</dbReference>
<dbReference type="GO" id="GO:0005829">
    <property type="term" value="C:cytosol"/>
    <property type="evidence" value="ECO:0007669"/>
    <property type="project" value="TreeGrafter"/>
</dbReference>
<dbReference type="GO" id="GO:0008837">
    <property type="term" value="F:diaminopimelate epimerase activity"/>
    <property type="evidence" value="ECO:0007669"/>
    <property type="project" value="UniProtKB-UniRule"/>
</dbReference>
<dbReference type="GO" id="GO:0009089">
    <property type="term" value="P:lysine biosynthetic process via diaminopimelate"/>
    <property type="evidence" value="ECO:0007669"/>
    <property type="project" value="UniProtKB-UniRule"/>
</dbReference>
<dbReference type="FunFam" id="3.10.310.10:FF:000021">
    <property type="entry name" value="Diaminopimelate epimerase"/>
    <property type="match status" value="1"/>
</dbReference>
<dbReference type="Gene3D" id="3.10.310.10">
    <property type="entry name" value="Diaminopimelate Epimerase, Chain A, domain 1"/>
    <property type="match status" value="2"/>
</dbReference>
<dbReference type="HAMAP" id="MF_00197">
    <property type="entry name" value="DAP_epimerase"/>
    <property type="match status" value="1"/>
</dbReference>
<dbReference type="InterPro" id="IPR018510">
    <property type="entry name" value="DAP_epimerase_AS"/>
</dbReference>
<dbReference type="InterPro" id="IPR001653">
    <property type="entry name" value="DAP_epimerase_DapF"/>
</dbReference>
<dbReference type="NCBIfam" id="TIGR00652">
    <property type="entry name" value="DapF"/>
    <property type="match status" value="1"/>
</dbReference>
<dbReference type="PANTHER" id="PTHR31689:SF0">
    <property type="entry name" value="DIAMINOPIMELATE EPIMERASE"/>
    <property type="match status" value="1"/>
</dbReference>
<dbReference type="PANTHER" id="PTHR31689">
    <property type="entry name" value="DIAMINOPIMELATE EPIMERASE, CHLOROPLASTIC"/>
    <property type="match status" value="1"/>
</dbReference>
<dbReference type="Pfam" id="PF01678">
    <property type="entry name" value="DAP_epimerase"/>
    <property type="match status" value="2"/>
</dbReference>
<dbReference type="SUPFAM" id="SSF54506">
    <property type="entry name" value="Diaminopimelate epimerase-like"/>
    <property type="match status" value="2"/>
</dbReference>
<dbReference type="PROSITE" id="PS01326">
    <property type="entry name" value="DAP_EPIMERASE"/>
    <property type="match status" value="1"/>
</dbReference>
<feature type="chain" id="PRO_1000204063" description="Diaminopimelate epimerase">
    <location>
        <begin position="1"/>
        <end position="329"/>
    </location>
</feature>
<feature type="active site" description="Proton donor" evidence="1">
    <location>
        <position position="82"/>
    </location>
</feature>
<feature type="active site" description="Proton acceptor" evidence="1">
    <location>
        <position position="233"/>
    </location>
</feature>
<feature type="binding site" evidence="1">
    <location>
        <position position="14"/>
    </location>
    <ligand>
        <name>substrate</name>
    </ligand>
</feature>
<feature type="binding site" evidence="1">
    <location>
        <position position="73"/>
    </location>
    <ligand>
        <name>substrate</name>
    </ligand>
</feature>
<feature type="binding site" evidence="1">
    <location>
        <begin position="83"/>
        <end position="84"/>
    </location>
    <ligand>
        <name>substrate</name>
    </ligand>
</feature>
<feature type="binding site" evidence="1">
    <location>
        <position position="170"/>
    </location>
    <ligand>
        <name>substrate</name>
    </ligand>
</feature>
<feature type="binding site" evidence="1">
    <location>
        <position position="206"/>
    </location>
    <ligand>
        <name>substrate</name>
    </ligand>
</feature>
<feature type="binding site" evidence="1">
    <location>
        <begin position="224"/>
        <end position="225"/>
    </location>
    <ligand>
        <name>substrate</name>
    </ligand>
</feature>
<feature type="binding site" evidence="1">
    <location>
        <begin position="234"/>
        <end position="235"/>
    </location>
    <ligand>
        <name>substrate</name>
    </ligand>
</feature>
<feature type="site" description="Could be important to modulate the pK values of the two catalytic cysteine residues" evidence="1">
    <location>
        <position position="172"/>
    </location>
</feature>
<feature type="site" description="Could be important to modulate the pK values of the two catalytic cysteine residues" evidence="1">
    <location>
        <position position="224"/>
    </location>
</feature>